<comment type="function">
    <text evidence="1">Tetrapolymerization of the monopyrrole PBG into the hydroxymethylbilane pre-uroporphyrinogen in several discrete steps.</text>
</comment>
<comment type="catalytic activity">
    <reaction evidence="1">
        <text>4 porphobilinogen + H2O = hydroxymethylbilane + 4 NH4(+)</text>
        <dbReference type="Rhea" id="RHEA:13185"/>
        <dbReference type="ChEBI" id="CHEBI:15377"/>
        <dbReference type="ChEBI" id="CHEBI:28938"/>
        <dbReference type="ChEBI" id="CHEBI:57845"/>
        <dbReference type="ChEBI" id="CHEBI:58126"/>
        <dbReference type="EC" id="2.5.1.61"/>
    </reaction>
</comment>
<comment type="cofactor">
    <cofactor evidence="1">
        <name>dipyrromethane</name>
        <dbReference type="ChEBI" id="CHEBI:60342"/>
    </cofactor>
    <text evidence="1">Binds 1 dipyrromethane group covalently.</text>
</comment>
<comment type="pathway">
    <text evidence="1">Porphyrin-containing compound metabolism; protoporphyrin-IX biosynthesis; coproporphyrinogen-III from 5-aminolevulinate: step 2/4.</text>
</comment>
<comment type="subunit">
    <text evidence="1">Monomer.</text>
</comment>
<comment type="miscellaneous">
    <text evidence="1">The porphobilinogen subunits are added to the dipyrromethane group.</text>
</comment>
<comment type="similarity">
    <text evidence="1">Belongs to the HMBS family.</text>
</comment>
<keyword id="KW-0627">Porphyrin biosynthesis</keyword>
<keyword id="KW-0808">Transferase</keyword>
<dbReference type="EC" id="2.5.1.61" evidence="1"/>
<dbReference type="EMBL" id="CP000438">
    <property type="protein sequence ID" value="ABJ14644.1"/>
    <property type="molecule type" value="Genomic_DNA"/>
</dbReference>
<dbReference type="RefSeq" id="WP_003141963.1">
    <property type="nucleotide sequence ID" value="NZ_CP034244.1"/>
</dbReference>
<dbReference type="SMR" id="Q02EA3"/>
<dbReference type="KEGG" id="pau:PA14_69450"/>
<dbReference type="PseudoCAP" id="PA14_69450"/>
<dbReference type="HOGENOM" id="CLU_019704_0_2_6"/>
<dbReference type="BioCyc" id="PAER208963:G1G74-5851-MONOMER"/>
<dbReference type="UniPathway" id="UPA00251">
    <property type="reaction ID" value="UER00319"/>
</dbReference>
<dbReference type="Proteomes" id="UP000000653">
    <property type="component" value="Chromosome"/>
</dbReference>
<dbReference type="GO" id="GO:0005737">
    <property type="term" value="C:cytoplasm"/>
    <property type="evidence" value="ECO:0007669"/>
    <property type="project" value="TreeGrafter"/>
</dbReference>
<dbReference type="GO" id="GO:0004418">
    <property type="term" value="F:hydroxymethylbilane synthase activity"/>
    <property type="evidence" value="ECO:0007669"/>
    <property type="project" value="UniProtKB-UniRule"/>
</dbReference>
<dbReference type="GO" id="GO:0006782">
    <property type="term" value="P:protoporphyrinogen IX biosynthetic process"/>
    <property type="evidence" value="ECO:0007669"/>
    <property type="project" value="UniProtKB-UniRule"/>
</dbReference>
<dbReference type="CDD" id="cd13646">
    <property type="entry name" value="PBP2_EcHMBS_like"/>
    <property type="match status" value="1"/>
</dbReference>
<dbReference type="FunFam" id="3.30.160.40:FF:000002">
    <property type="entry name" value="Porphobilinogen deaminase"/>
    <property type="match status" value="1"/>
</dbReference>
<dbReference type="FunFam" id="3.40.190.10:FF:000004">
    <property type="entry name" value="Porphobilinogen deaminase"/>
    <property type="match status" value="1"/>
</dbReference>
<dbReference type="FunFam" id="3.40.190.10:FF:000005">
    <property type="entry name" value="Porphobilinogen deaminase"/>
    <property type="match status" value="1"/>
</dbReference>
<dbReference type="Gene3D" id="3.40.190.10">
    <property type="entry name" value="Periplasmic binding protein-like II"/>
    <property type="match status" value="2"/>
</dbReference>
<dbReference type="Gene3D" id="3.30.160.40">
    <property type="entry name" value="Porphobilinogen deaminase, C-terminal domain"/>
    <property type="match status" value="1"/>
</dbReference>
<dbReference type="HAMAP" id="MF_00260">
    <property type="entry name" value="Porphobil_deam"/>
    <property type="match status" value="1"/>
</dbReference>
<dbReference type="InterPro" id="IPR000860">
    <property type="entry name" value="HemC"/>
</dbReference>
<dbReference type="InterPro" id="IPR022419">
    <property type="entry name" value="Porphobilin_deaminase_cofac_BS"/>
</dbReference>
<dbReference type="InterPro" id="IPR022417">
    <property type="entry name" value="Porphobilin_deaminase_N"/>
</dbReference>
<dbReference type="InterPro" id="IPR022418">
    <property type="entry name" value="Porphobilinogen_deaminase_C"/>
</dbReference>
<dbReference type="InterPro" id="IPR036803">
    <property type="entry name" value="Porphobilinogen_deaminase_C_sf"/>
</dbReference>
<dbReference type="NCBIfam" id="TIGR00212">
    <property type="entry name" value="hemC"/>
    <property type="match status" value="1"/>
</dbReference>
<dbReference type="PANTHER" id="PTHR11557">
    <property type="entry name" value="PORPHOBILINOGEN DEAMINASE"/>
    <property type="match status" value="1"/>
</dbReference>
<dbReference type="PANTHER" id="PTHR11557:SF0">
    <property type="entry name" value="PORPHOBILINOGEN DEAMINASE"/>
    <property type="match status" value="1"/>
</dbReference>
<dbReference type="Pfam" id="PF01379">
    <property type="entry name" value="Porphobil_deam"/>
    <property type="match status" value="1"/>
</dbReference>
<dbReference type="Pfam" id="PF03900">
    <property type="entry name" value="Porphobil_deamC"/>
    <property type="match status" value="1"/>
</dbReference>
<dbReference type="PIRSF" id="PIRSF001438">
    <property type="entry name" value="4pyrrol_synth_OHMeBilane_synth"/>
    <property type="match status" value="1"/>
</dbReference>
<dbReference type="PRINTS" id="PR00151">
    <property type="entry name" value="PORPHBDMNASE"/>
</dbReference>
<dbReference type="SUPFAM" id="SSF53850">
    <property type="entry name" value="Periplasmic binding protein-like II"/>
    <property type="match status" value="1"/>
</dbReference>
<dbReference type="SUPFAM" id="SSF54782">
    <property type="entry name" value="Porphobilinogen deaminase (hydroxymethylbilane synthase), C-terminal domain"/>
    <property type="match status" value="1"/>
</dbReference>
<dbReference type="PROSITE" id="PS00533">
    <property type="entry name" value="PORPHOBILINOGEN_DEAM"/>
    <property type="match status" value="1"/>
</dbReference>
<evidence type="ECO:0000255" key="1">
    <source>
        <dbReference type="HAMAP-Rule" id="MF_00260"/>
    </source>
</evidence>
<protein>
    <recommendedName>
        <fullName evidence="1">Porphobilinogen deaminase</fullName>
        <shortName evidence="1">PBG</shortName>
        <ecNumber evidence="1">2.5.1.61</ecNumber>
    </recommendedName>
    <alternativeName>
        <fullName evidence="1">Hydroxymethylbilane synthase</fullName>
        <shortName evidence="1">HMBS</shortName>
    </alternativeName>
    <alternativeName>
        <fullName evidence="1">Pre-uroporphyrinogen synthase</fullName>
    </alternativeName>
</protein>
<name>HEM3_PSEAB</name>
<organism>
    <name type="scientific">Pseudomonas aeruginosa (strain UCBPP-PA14)</name>
    <dbReference type="NCBI Taxonomy" id="208963"/>
    <lineage>
        <taxon>Bacteria</taxon>
        <taxon>Pseudomonadati</taxon>
        <taxon>Pseudomonadota</taxon>
        <taxon>Gammaproteobacteria</taxon>
        <taxon>Pseudomonadales</taxon>
        <taxon>Pseudomonadaceae</taxon>
        <taxon>Pseudomonas</taxon>
    </lineage>
</organism>
<reference key="1">
    <citation type="journal article" date="2006" name="Genome Biol.">
        <title>Genomic analysis reveals that Pseudomonas aeruginosa virulence is combinatorial.</title>
        <authorList>
            <person name="Lee D.G."/>
            <person name="Urbach J.M."/>
            <person name="Wu G."/>
            <person name="Liberati N.T."/>
            <person name="Feinbaum R.L."/>
            <person name="Miyata S."/>
            <person name="Diggins L.T."/>
            <person name="He J."/>
            <person name="Saucier M."/>
            <person name="Deziel E."/>
            <person name="Friedman L."/>
            <person name="Li L."/>
            <person name="Grills G."/>
            <person name="Montgomery K."/>
            <person name="Kucherlapati R."/>
            <person name="Rahme L.G."/>
            <person name="Ausubel F.M."/>
        </authorList>
    </citation>
    <scope>NUCLEOTIDE SEQUENCE [LARGE SCALE GENOMIC DNA]</scope>
    <source>
        <strain>UCBPP-PA14</strain>
    </source>
</reference>
<feature type="chain" id="PRO_0000304265" description="Porphobilinogen deaminase">
    <location>
        <begin position="1"/>
        <end position="313"/>
    </location>
</feature>
<feature type="modified residue" description="S-(dipyrrolylmethanemethyl)cysteine" evidence="1">
    <location>
        <position position="242"/>
    </location>
</feature>
<proteinExistence type="inferred from homology"/>
<gene>
    <name evidence="1" type="primary">hemC</name>
    <name type="ordered locus">PA14_69450</name>
</gene>
<accession>Q02EA3</accession>
<sequence>MSSREIRIATRQSALALWQAEYVKARLEQAHPGLTVTLLPMTSRGDKLLDAPLAKIGGKGLFVKELETALLEGAADIAVHSMKDVPMDFPEGLGLYTICEREDPRDAFVSNTYASLEQLPAGSVVGTSSLRRQAQLLARRPDLQIRFLRGNVNTRLAKLDAGEYDAIILAAAGLIRLGFESRIRSSISVDDSLPAGGQGAVGIECRTADSDLHALLEPLHHSDTALRVTAERALNKRLNGGCQVPIACYAIREGDQLWLRGLVGQPDGTQLLRAEGRAPLAEAEALGVRVAEDLLEQGAEAILEAVYGEAGHP</sequence>